<feature type="chain" id="PRO_0000178356" description="Small ribosomal subunit protein bS21">
    <location>
        <begin position="1"/>
        <end position="70"/>
    </location>
</feature>
<organism>
    <name type="scientific">Neisseria meningitidis serogroup B (strain ATCC BAA-335 / MC58)</name>
    <dbReference type="NCBI Taxonomy" id="122586"/>
    <lineage>
        <taxon>Bacteria</taxon>
        <taxon>Pseudomonadati</taxon>
        <taxon>Pseudomonadota</taxon>
        <taxon>Betaproteobacteria</taxon>
        <taxon>Neisseriales</taxon>
        <taxon>Neisseriaceae</taxon>
        <taxon>Neisseria</taxon>
    </lineage>
</organism>
<proteinExistence type="evidence at protein level"/>
<reference key="1">
    <citation type="journal article" date="2000" name="Science">
        <title>Complete genome sequence of Neisseria meningitidis serogroup B strain MC58.</title>
        <authorList>
            <person name="Tettelin H."/>
            <person name="Saunders N.J."/>
            <person name="Heidelberg J.F."/>
            <person name="Jeffries A.C."/>
            <person name="Nelson K.E."/>
            <person name="Eisen J.A."/>
            <person name="Ketchum K.A."/>
            <person name="Hood D.W."/>
            <person name="Peden J.F."/>
            <person name="Dodson R.J."/>
            <person name="Nelson W.C."/>
            <person name="Gwinn M.L."/>
            <person name="DeBoy R.T."/>
            <person name="Peterson J.D."/>
            <person name="Hickey E.K."/>
            <person name="Haft D.H."/>
            <person name="Salzberg S.L."/>
            <person name="White O."/>
            <person name="Fleischmann R.D."/>
            <person name="Dougherty B.A."/>
            <person name="Mason T.M."/>
            <person name="Ciecko A."/>
            <person name="Parksey D.S."/>
            <person name="Blair E."/>
            <person name="Cittone H."/>
            <person name="Clark E.B."/>
            <person name="Cotton M.D."/>
            <person name="Utterback T.R."/>
            <person name="Khouri H.M."/>
            <person name="Qin H."/>
            <person name="Vamathevan J.J."/>
            <person name="Gill J."/>
            <person name="Scarlato V."/>
            <person name="Masignani V."/>
            <person name="Pizza M."/>
            <person name="Grandi G."/>
            <person name="Sun L."/>
            <person name="Smith H.O."/>
            <person name="Fraser C.M."/>
            <person name="Moxon E.R."/>
            <person name="Rappuoli R."/>
            <person name="Venter J.C."/>
        </authorList>
    </citation>
    <scope>NUCLEOTIDE SEQUENCE [LARGE SCALE GENOMIC DNA]</scope>
    <source>
        <strain>ATCC BAA-335 / MC58</strain>
    </source>
</reference>
<reference key="2">
    <citation type="journal article" date="2005" name="Hum. Vaccin.">
        <title>Characterization of the protein content of a meningococcal outer membrane vesicle vaccine by polyacrylamide gel electrophoresis and mass spectrometry.</title>
        <authorList>
            <person name="Vipond C."/>
            <person name="Wheeler J.X."/>
            <person name="Jones C."/>
            <person name="Feavers I.M."/>
            <person name="Suker J."/>
        </authorList>
    </citation>
    <scope>IDENTIFICATION BY MASS SPECTROMETRY [LARGE SCALE ANALYSIS]</scope>
</reference>
<protein>
    <recommendedName>
        <fullName evidence="1">Small ribosomal subunit protein bS21</fullName>
    </recommendedName>
    <alternativeName>
        <fullName>30S ribosomal protein S21</fullName>
    </alternativeName>
</protein>
<gene>
    <name type="primary">rpsU</name>
    <name type="ordered locus">NMB1950</name>
</gene>
<sequence>MPAIRVKENEPFEVAMRRFKRAVEKTGLLTELRAREAYEKPTTERKRKKAAAVKRLQKRLRSQQLPPKMY</sequence>
<keyword id="KW-1185">Reference proteome</keyword>
<keyword id="KW-0687">Ribonucleoprotein</keyword>
<keyword id="KW-0689">Ribosomal protein</keyword>
<accession>P66519</accession>
<accession>Q9JRG3</accession>
<dbReference type="EMBL" id="AE002098">
    <property type="protein sequence ID" value="AAF42279.1"/>
    <property type="molecule type" value="Genomic_DNA"/>
</dbReference>
<dbReference type="PIR" id="G81023">
    <property type="entry name" value="G81023"/>
</dbReference>
<dbReference type="RefSeq" id="NP_274944.1">
    <property type="nucleotide sequence ID" value="NC_003112.2"/>
</dbReference>
<dbReference type="RefSeq" id="WP_002214819.1">
    <property type="nucleotide sequence ID" value="NC_003112.2"/>
</dbReference>
<dbReference type="SMR" id="P66519"/>
<dbReference type="FunCoup" id="P66519">
    <property type="interactions" value="476"/>
</dbReference>
<dbReference type="STRING" id="122586.NMB1950"/>
<dbReference type="PaxDb" id="122586-NMB1950"/>
<dbReference type="GeneID" id="93386856"/>
<dbReference type="KEGG" id="nme:NMB1950"/>
<dbReference type="PATRIC" id="fig|122586.8.peg.2483"/>
<dbReference type="HOGENOM" id="CLU_159258_1_1_4"/>
<dbReference type="InParanoid" id="P66519"/>
<dbReference type="OrthoDB" id="9799244at2"/>
<dbReference type="PRO" id="PR:P66519"/>
<dbReference type="Proteomes" id="UP000000425">
    <property type="component" value="Chromosome"/>
</dbReference>
<dbReference type="GO" id="GO:1990904">
    <property type="term" value="C:ribonucleoprotein complex"/>
    <property type="evidence" value="ECO:0007669"/>
    <property type="project" value="UniProtKB-KW"/>
</dbReference>
<dbReference type="GO" id="GO:0005840">
    <property type="term" value="C:ribosome"/>
    <property type="evidence" value="ECO:0007669"/>
    <property type="project" value="UniProtKB-KW"/>
</dbReference>
<dbReference type="GO" id="GO:0003735">
    <property type="term" value="F:structural constituent of ribosome"/>
    <property type="evidence" value="ECO:0007669"/>
    <property type="project" value="InterPro"/>
</dbReference>
<dbReference type="GO" id="GO:0006412">
    <property type="term" value="P:translation"/>
    <property type="evidence" value="ECO:0007669"/>
    <property type="project" value="UniProtKB-UniRule"/>
</dbReference>
<dbReference type="Gene3D" id="1.20.5.1150">
    <property type="entry name" value="Ribosomal protein S8"/>
    <property type="match status" value="1"/>
</dbReference>
<dbReference type="HAMAP" id="MF_00358">
    <property type="entry name" value="Ribosomal_bS21"/>
    <property type="match status" value="1"/>
</dbReference>
<dbReference type="InterPro" id="IPR001911">
    <property type="entry name" value="Ribosomal_bS21"/>
</dbReference>
<dbReference type="InterPro" id="IPR038380">
    <property type="entry name" value="Ribosomal_bS21_sf"/>
</dbReference>
<dbReference type="NCBIfam" id="TIGR00030">
    <property type="entry name" value="S21p"/>
    <property type="match status" value="1"/>
</dbReference>
<dbReference type="PANTHER" id="PTHR21109">
    <property type="entry name" value="MITOCHONDRIAL 28S RIBOSOMAL PROTEIN S21"/>
    <property type="match status" value="1"/>
</dbReference>
<dbReference type="PANTHER" id="PTHR21109:SF22">
    <property type="entry name" value="SMALL RIBOSOMAL SUBUNIT PROTEIN BS21"/>
    <property type="match status" value="1"/>
</dbReference>
<dbReference type="Pfam" id="PF01165">
    <property type="entry name" value="Ribosomal_S21"/>
    <property type="match status" value="1"/>
</dbReference>
<dbReference type="PRINTS" id="PR00976">
    <property type="entry name" value="RIBOSOMALS21"/>
</dbReference>
<comment type="miscellaneous">
    <text>Present in outer membrane vesicle formulations which are used as vaccines in human.</text>
</comment>
<comment type="similarity">
    <text evidence="1">Belongs to the bacterial ribosomal protein bS21 family.</text>
</comment>
<name>RS21_NEIMB</name>
<evidence type="ECO:0000305" key="1"/>